<name>IF1_MYCBP</name>
<gene>
    <name evidence="1" type="primary">infA</name>
    <name type="ordered locus">BCG_3527c</name>
</gene>
<reference key="1">
    <citation type="journal article" date="2007" name="Proc. Natl. Acad. Sci. U.S.A.">
        <title>Genome plasticity of BCG and impact on vaccine efficacy.</title>
        <authorList>
            <person name="Brosch R."/>
            <person name="Gordon S.V."/>
            <person name="Garnier T."/>
            <person name="Eiglmeier K."/>
            <person name="Frigui W."/>
            <person name="Valenti P."/>
            <person name="Dos Santos S."/>
            <person name="Duthoy S."/>
            <person name="Lacroix C."/>
            <person name="Garcia-Pelayo C."/>
            <person name="Inwald J.K."/>
            <person name="Golby P."/>
            <person name="Garcia J.N."/>
            <person name="Hewinson R.G."/>
            <person name="Behr M.A."/>
            <person name="Quail M.A."/>
            <person name="Churcher C."/>
            <person name="Barrell B.G."/>
            <person name="Parkhill J."/>
            <person name="Cole S.T."/>
        </authorList>
    </citation>
    <scope>NUCLEOTIDE SEQUENCE [LARGE SCALE GENOMIC DNA]</scope>
    <source>
        <strain>BCG / Pasteur 1173P2</strain>
    </source>
</reference>
<protein>
    <recommendedName>
        <fullName evidence="1">Translation initiation factor IF-1</fullName>
    </recommendedName>
</protein>
<organism>
    <name type="scientific">Mycobacterium bovis (strain BCG / Pasteur 1173P2)</name>
    <dbReference type="NCBI Taxonomy" id="410289"/>
    <lineage>
        <taxon>Bacteria</taxon>
        <taxon>Bacillati</taxon>
        <taxon>Actinomycetota</taxon>
        <taxon>Actinomycetes</taxon>
        <taxon>Mycobacteriales</taxon>
        <taxon>Mycobacteriaceae</taxon>
        <taxon>Mycobacterium</taxon>
        <taxon>Mycobacterium tuberculosis complex</taxon>
    </lineage>
</organism>
<keyword id="KW-0963">Cytoplasm</keyword>
<keyword id="KW-0396">Initiation factor</keyword>
<keyword id="KW-0648">Protein biosynthesis</keyword>
<keyword id="KW-0694">RNA-binding</keyword>
<keyword id="KW-0699">rRNA-binding</keyword>
<comment type="function">
    <text evidence="1">One of the essential components for the initiation of protein synthesis. Stabilizes the binding of IF-2 and IF-3 on the 30S subunit to which N-formylmethionyl-tRNA(fMet) subsequently binds. Helps modulate mRNA selection, yielding the 30S pre-initiation complex (PIC). Upon addition of the 50S ribosomal subunit IF-1, IF-2 and IF-3 are released leaving the mature 70S translation initiation complex.</text>
</comment>
<comment type="subunit">
    <text evidence="1">Component of the 30S ribosomal translation pre-initiation complex which assembles on the 30S ribosome in the order IF-2 and IF-3, IF-1 and N-formylmethionyl-tRNA(fMet); mRNA recruitment can occur at any time during PIC assembly.</text>
</comment>
<comment type="subcellular location">
    <subcellularLocation>
        <location evidence="1">Cytoplasm</location>
    </subcellularLocation>
</comment>
<comment type="similarity">
    <text evidence="1">Belongs to the IF-1 family.</text>
</comment>
<evidence type="ECO:0000255" key="1">
    <source>
        <dbReference type="HAMAP-Rule" id="MF_00075"/>
    </source>
</evidence>
<feature type="chain" id="PRO_0000338860" description="Translation initiation factor IF-1">
    <location>
        <begin position="1"/>
        <end position="73"/>
    </location>
</feature>
<feature type="domain" description="S1-like" evidence="1">
    <location>
        <begin position="1"/>
        <end position="73"/>
    </location>
</feature>
<sequence length="73" mass="8489">MAKKDGAIEVEGRVVEPLPNAMFRIELENGHKVLAHISGKMRQHYIRILPEDRVVVELSPYDLSRGRIVYRYK</sequence>
<proteinExistence type="inferred from homology"/>
<dbReference type="EMBL" id="AM408590">
    <property type="protein sequence ID" value="CAL73516.1"/>
    <property type="molecule type" value="Genomic_DNA"/>
</dbReference>
<dbReference type="RefSeq" id="WP_003418601.1">
    <property type="nucleotide sequence ID" value="NC_008769.1"/>
</dbReference>
<dbReference type="SMR" id="A1KPE8"/>
<dbReference type="GeneID" id="98799387"/>
<dbReference type="KEGG" id="mbb:BCG_3527c"/>
<dbReference type="HOGENOM" id="CLU_151267_1_0_11"/>
<dbReference type="Proteomes" id="UP000001472">
    <property type="component" value="Chromosome"/>
</dbReference>
<dbReference type="GO" id="GO:0005829">
    <property type="term" value="C:cytosol"/>
    <property type="evidence" value="ECO:0007669"/>
    <property type="project" value="TreeGrafter"/>
</dbReference>
<dbReference type="GO" id="GO:0043022">
    <property type="term" value="F:ribosome binding"/>
    <property type="evidence" value="ECO:0007669"/>
    <property type="project" value="UniProtKB-UniRule"/>
</dbReference>
<dbReference type="GO" id="GO:0019843">
    <property type="term" value="F:rRNA binding"/>
    <property type="evidence" value="ECO:0007669"/>
    <property type="project" value="UniProtKB-UniRule"/>
</dbReference>
<dbReference type="GO" id="GO:0003743">
    <property type="term" value="F:translation initiation factor activity"/>
    <property type="evidence" value="ECO:0007669"/>
    <property type="project" value="UniProtKB-UniRule"/>
</dbReference>
<dbReference type="CDD" id="cd04451">
    <property type="entry name" value="S1_IF1"/>
    <property type="match status" value="1"/>
</dbReference>
<dbReference type="FunFam" id="2.40.50.140:FF:000002">
    <property type="entry name" value="Translation initiation factor IF-1"/>
    <property type="match status" value="1"/>
</dbReference>
<dbReference type="Gene3D" id="2.40.50.140">
    <property type="entry name" value="Nucleic acid-binding proteins"/>
    <property type="match status" value="1"/>
</dbReference>
<dbReference type="HAMAP" id="MF_00075">
    <property type="entry name" value="IF_1"/>
    <property type="match status" value="1"/>
</dbReference>
<dbReference type="InterPro" id="IPR012340">
    <property type="entry name" value="NA-bd_OB-fold"/>
</dbReference>
<dbReference type="InterPro" id="IPR006196">
    <property type="entry name" value="RNA-binding_domain_S1_IF1"/>
</dbReference>
<dbReference type="InterPro" id="IPR004368">
    <property type="entry name" value="TIF_IF1"/>
</dbReference>
<dbReference type="NCBIfam" id="TIGR00008">
    <property type="entry name" value="infA"/>
    <property type="match status" value="1"/>
</dbReference>
<dbReference type="PANTHER" id="PTHR33370">
    <property type="entry name" value="TRANSLATION INITIATION FACTOR IF-1, CHLOROPLASTIC"/>
    <property type="match status" value="1"/>
</dbReference>
<dbReference type="PANTHER" id="PTHR33370:SF1">
    <property type="entry name" value="TRANSLATION INITIATION FACTOR IF-1, CHLOROPLASTIC"/>
    <property type="match status" value="1"/>
</dbReference>
<dbReference type="Pfam" id="PF01176">
    <property type="entry name" value="eIF-1a"/>
    <property type="match status" value="1"/>
</dbReference>
<dbReference type="SUPFAM" id="SSF50249">
    <property type="entry name" value="Nucleic acid-binding proteins"/>
    <property type="match status" value="1"/>
</dbReference>
<dbReference type="PROSITE" id="PS50832">
    <property type="entry name" value="S1_IF1_TYPE"/>
    <property type="match status" value="1"/>
</dbReference>
<accession>A1KPE8</accession>